<name>FIBL_BOMMO</name>
<feature type="signal peptide" evidence="4">
    <location>
        <begin position="1"/>
        <end position="16"/>
    </location>
</feature>
<feature type="chain" id="PRO_0000021256" description="Fibroin light chain">
    <location>
        <begin position="17"/>
        <end position="262"/>
    </location>
</feature>
<feature type="chain" id="PRO_0000389559" description="Fibroin light chain, short form">
    <location>
        <begin position="19"/>
        <end position="262"/>
    </location>
</feature>
<feature type="modified residue" description="N-acetylserine; in short form" evidence="3">
    <location>
        <position position="19"/>
    </location>
</feature>
<feature type="disulfide bond" evidence="1">
    <location>
        <begin position="101"/>
        <end position="160"/>
    </location>
</feature>
<feature type="disulfide bond" description="Interchain (with C-5244 in heavy chain)">
    <location>
        <position position="190"/>
    </location>
</feature>
<feature type="sequence conflict" description="In Ref. 3; AAA27840." evidence="5" ref="3">
    <original>A</original>
    <variation>R</variation>
    <location>
        <position position="46"/>
    </location>
</feature>
<keyword id="KW-0007">Acetylation</keyword>
<keyword id="KW-0903">Direct protein sequencing</keyword>
<keyword id="KW-1015">Disulfide bond</keyword>
<keyword id="KW-1185">Reference proteome</keyword>
<keyword id="KW-0964">Secreted</keyword>
<keyword id="KW-0732">Signal</keyword>
<keyword id="KW-0737">Silk protein</keyword>
<reference key="1">
    <citation type="journal article" date="1989" name="J. Mol. Biol.">
        <title>Primary structure of the silk fibroin light chain determined by cDNA sequencing and peptide analysis.</title>
        <authorList>
            <person name="Yamaguchi K."/>
            <person name="Kikuchi Y."/>
            <person name="Takagi T."/>
            <person name="Kikuchi A."/>
            <person name="Oyama F."/>
            <person name="Shimura K."/>
            <person name="Mizuno S."/>
        </authorList>
    </citation>
    <scope>NUCLEOTIDE SEQUENCE [MRNA]</scope>
    <scope>PARTIAL PROTEIN SEQUENCE</scope>
    <scope>ACETYLATION AT SER-19</scope>
    <source>
        <strain>J-139</strain>
        <tissue>Posterior silk gland</tissue>
    </source>
</reference>
<reference key="2">
    <citation type="journal article" date="2004" name="Science">
        <title>A draft sequence for the genome of the domesticated silkworm (Bombyx mori).</title>
        <authorList>
            <person name="Xia Q."/>
            <person name="Zhou Z."/>
            <person name="Lu C."/>
            <person name="Cheng D."/>
            <person name="Dai F."/>
            <person name="Li B."/>
            <person name="Zhao P."/>
            <person name="Zha X."/>
            <person name="Cheng T."/>
            <person name="Chai C."/>
            <person name="Pan G."/>
            <person name="Xu J."/>
            <person name="Liu C."/>
            <person name="Lin Y."/>
            <person name="Qian J."/>
            <person name="Hou Y."/>
            <person name="Wu Z."/>
            <person name="Li G."/>
            <person name="Pan M."/>
            <person name="Li C."/>
            <person name="Shen Y."/>
            <person name="Lan X."/>
            <person name="Yuan L."/>
            <person name="Li T."/>
            <person name="Xu H."/>
            <person name="Yang G."/>
            <person name="Wan Y."/>
            <person name="Zhu Y."/>
            <person name="Yu M."/>
            <person name="Shen W."/>
            <person name="Wu D."/>
            <person name="Xiang Z."/>
            <person name="Yu J."/>
            <person name="Wang J."/>
            <person name="Li R."/>
            <person name="Shi J."/>
            <person name="Li H."/>
            <person name="Li G."/>
            <person name="Su J."/>
            <person name="Wang X."/>
            <person name="Li G."/>
            <person name="Zhang Z."/>
            <person name="Wu Q."/>
            <person name="Li J."/>
            <person name="Zhang Q."/>
            <person name="Wei N."/>
            <person name="Xu J."/>
            <person name="Sun H."/>
            <person name="Dong L."/>
            <person name="Liu D."/>
            <person name="Zhao S."/>
            <person name="Zhao X."/>
            <person name="Meng Q."/>
            <person name="Lan F."/>
            <person name="Huang X."/>
            <person name="Li Y."/>
            <person name="Fang L."/>
            <person name="Li C."/>
            <person name="Li D."/>
            <person name="Sun Y."/>
            <person name="Zhang Z."/>
            <person name="Yang Z."/>
            <person name="Huang Y."/>
            <person name="Xi Y."/>
            <person name="Qi Q."/>
            <person name="He D."/>
            <person name="Huang H."/>
            <person name="Zhang X."/>
            <person name="Wang Z."/>
            <person name="Li W."/>
            <person name="Cao Y."/>
            <person name="Yu Y."/>
            <person name="Yu H."/>
            <person name="Li J."/>
            <person name="Ye J."/>
            <person name="Chen H."/>
            <person name="Zhou Y."/>
            <person name="Liu B."/>
            <person name="Wang J."/>
            <person name="Ye J."/>
            <person name="Ji H."/>
            <person name="Li S."/>
            <person name="Ni P."/>
            <person name="Zhang J."/>
            <person name="Zhang Y."/>
            <person name="Zheng H."/>
            <person name="Mao B."/>
            <person name="Wang W."/>
            <person name="Ye C."/>
            <person name="Li S."/>
            <person name="Wang J."/>
            <person name="Wong G.K.-S."/>
            <person name="Yang H."/>
        </authorList>
    </citation>
    <scope>NUCLEOTIDE SEQUENCE [LARGE SCALE GENOMIC DNA]</scope>
    <source>
        <strain>p50T</strain>
    </source>
</reference>
<reference key="3">
    <citation type="journal article" date="1992" name="Gene">
        <title>Structure of the Bombyx mori fibroin light-chain-encoding gene: upstream sequence elements common to the light and heavy chain.</title>
        <authorList>
            <person name="Kikuchi Y."/>
            <person name="Mori K."/>
            <person name="Suzuki S."/>
            <person name="Yamaguchi K."/>
            <person name="Mizuno S."/>
        </authorList>
    </citation>
    <scope>NUCLEOTIDE SEQUENCE [GENOMIC DNA]</scope>
    <source>
        <tissue>Posterior silk gland</tissue>
    </source>
</reference>
<reference key="4">
    <citation type="journal article" date="1990" name="J. Mol. Biol.">
        <title>Homeodomain binding sites in the 5' flanking region of the Bombyx mori silk fibroin light-chain gene.</title>
        <authorList>
            <person name="Hui C.C."/>
            <person name="Suzuki Y."/>
            <person name="Kikuchi Y."/>
            <person name="Mizuno S."/>
        </authorList>
    </citation>
    <scope>NUCLEOTIDE SEQUENCE [GENOMIC DNA] OF 1-12</scope>
</reference>
<reference key="5">
    <citation type="submission" date="2009-08" db="UniProtKB">
        <authorList>
            <person name="Lubec G."/>
            <person name="Chen W.-Q."/>
        </authorList>
    </citation>
    <scope>PROTEIN SEQUENCE OF 17-262</scope>
    <scope>IDENTIFICATION BY MASS SPECTROMETRY</scope>
    <source>
        <tissue>Silk gland</tissue>
    </source>
</reference>
<reference key="6">
    <citation type="journal article" date="1999" name="Biochim. Biophys. Acta">
        <title>Determination of the site of disulfide linkage between heavy and light chains of silk fibroin produced by Bombyx mori.</title>
        <authorList>
            <person name="Tanaka K."/>
            <person name="Kajiyama N."/>
            <person name="Ishikura K."/>
            <person name="Waga S."/>
            <person name="Kikuchi A."/>
            <person name="Ohtomo K."/>
            <person name="Takagi T."/>
            <person name="Mizuno S."/>
        </authorList>
    </citation>
    <scope>INTERCHAIN DISULFIDE BOND</scope>
    <source>
        <strain>J-139</strain>
    </source>
</reference>
<reference key="7">
    <citation type="journal article" date="2000" name="J. Biol. Chem.">
        <title>Silk fibroin of Bombyx mori is secreted, assembling a high molecular mass elementary unit consisting of H-chain, L-chain, and p25, with a 6:6:1 molar ratio.</title>
        <authorList>
            <person name="Inoue S."/>
            <person name="Tanaka K."/>
            <person name="Arisaka F."/>
            <person name="Kimura S."/>
            <person name="Ohtomo K."/>
            <person name="Mizuno S."/>
        </authorList>
    </citation>
    <scope>SUBUNIT</scope>
</reference>
<comment type="function">
    <text>It is likely that the major role of L-chain is to prevent the retention of H-chain in ER by forming the disulfide linkage.</text>
</comment>
<comment type="subunit">
    <text evidence="2">Silk fibroin elementary unit consists in a disulfide-linked heavy and light chain and a p25 glycoprotein in molar ratios of 6:6:1. This results in a complex of approximately 2.3 MDa.</text>
</comment>
<comment type="subcellular location">
    <subcellularLocation>
        <location>Secreted</location>
    </subcellularLocation>
</comment>
<comment type="tissue specificity">
    <text>Produced exclusively in the posterior (PSG) section of silk glands, which are essentially modified salivary glands.</text>
</comment>
<comment type="PTM">
    <text>The interchain disulfide bridge is essential for the intracellular transport and secretion of fibroin.</text>
</comment>
<comment type="PTM">
    <text>Partially N-terminally processed to yield a short form which lacks the first two residues of the long form.</text>
</comment>
<proteinExistence type="evidence at protein level"/>
<gene>
    <name type="primary">FIBL</name>
</gene>
<organism>
    <name type="scientific">Bombyx mori</name>
    <name type="common">Silk moth</name>
    <dbReference type="NCBI Taxonomy" id="7091"/>
    <lineage>
        <taxon>Eukaryota</taxon>
        <taxon>Metazoa</taxon>
        <taxon>Ecdysozoa</taxon>
        <taxon>Arthropoda</taxon>
        <taxon>Hexapoda</taxon>
        <taxon>Insecta</taxon>
        <taxon>Pterygota</taxon>
        <taxon>Neoptera</taxon>
        <taxon>Endopterygota</taxon>
        <taxon>Lepidoptera</taxon>
        <taxon>Glossata</taxon>
        <taxon>Ditrysia</taxon>
        <taxon>Bombycoidea</taxon>
        <taxon>Bombycidae</taxon>
        <taxon>Bombycinae</taxon>
        <taxon>Bombyx</taxon>
    </lineage>
</organism>
<dbReference type="EMBL" id="X17291">
    <property type="protein sequence ID" value="CAA35180.1"/>
    <property type="molecule type" value="mRNA"/>
</dbReference>
<dbReference type="EMBL" id="CK545649">
    <property type="status" value="NOT_ANNOTATED_CDS"/>
    <property type="molecule type" value="mRNA"/>
</dbReference>
<dbReference type="EMBL" id="CK545775">
    <property type="status" value="NOT_ANNOTATED_CDS"/>
    <property type="molecule type" value="mRNA"/>
</dbReference>
<dbReference type="EMBL" id="M76430">
    <property type="protein sequence ID" value="AAA27840.1"/>
    <property type="molecule type" value="Genomic_DNA"/>
</dbReference>
<dbReference type="PIR" id="A33470">
    <property type="entry name" value="A33470"/>
</dbReference>
<dbReference type="RefSeq" id="NP_001037488.1">
    <property type="nucleotide sequence ID" value="NM_001044023.1"/>
</dbReference>
<dbReference type="STRING" id="7091.P21828"/>
<dbReference type="iPTMnet" id="P21828"/>
<dbReference type="PaxDb" id="7091-BGIBMGA009393-TA"/>
<dbReference type="GeneID" id="693047"/>
<dbReference type="KEGG" id="bmor:693047"/>
<dbReference type="CTD" id="693047"/>
<dbReference type="eggNOG" id="ENOG502TBZW">
    <property type="taxonomic scope" value="Eukaryota"/>
</dbReference>
<dbReference type="HOGENOM" id="CLU_098789_0_0_1"/>
<dbReference type="InParanoid" id="P21828"/>
<dbReference type="OMA" id="LLNEEYC"/>
<dbReference type="OrthoDB" id="604417at7088"/>
<dbReference type="Proteomes" id="UP000005204">
    <property type="component" value="Unassembled WGS sequence"/>
</dbReference>
<dbReference type="GO" id="GO:0005576">
    <property type="term" value="C:extracellular region"/>
    <property type="evidence" value="ECO:0007669"/>
    <property type="project" value="UniProtKB-SubCell"/>
</dbReference>
<dbReference type="InterPro" id="IPR008660">
    <property type="entry name" value="L-fibroin"/>
</dbReference>
<dbReference type="Pfam" id="PF05849">
    <property type="entry name" value="L-fibroin"/>
    <property type="match status" value="1"/>
</dbReference>
<dbReference type="PIRSF" id="PIRSF005765">
    <property type="entry name" value="L-fibroin"/>
    <property type="match status" value="1"/>
</dbReference>
<protein>
    <recommendedName>
        <fullName>Fibroin light chain</fullName>
        <shortName>Fib-L</shortName>
    </recommendedName>
    <alternativeName>
        <fullName>L-fibroin</fullName>
    </alternativeName>
    <component>
        <recommendedName>
            <fullName>Fibroin light chain, short form</fullName>
        </recommendedName>
    </component>
</protein>
<accession>P21828</accession>
<accession>Q17224</accession>
<evidence type="ECO:0000255" key="1"/>
<evidence type="ECO:0000269" key="2">
    <source>
    </source>
</evidence>
<evidence type="ECO:0000269" key="3">
    <source>
    </source>
</evidence>
<evidence type="ECO:0000269" key="4">
    <source ref="5"/>
</evidence>
<evidence type="ECO:0000305" key="5"/>
<sequence length="262" mass="27669">MKPIFLVLLVATSAYAAPSVTINQYSDNEIPRDIDDGKASSVISRAWDYVDDTDKSIAILNVQEILKDMASQGDYASQASAVAQTAGIIAHLSAGIPGDACAAANVINSYTDGVRSGNFAGFRQSLGPFFGHVGQNLNLINQLVINPGQLRYSVGPALGCAGGGRIYDFEAAWDAILASSDSSFLNEEYCIVKRLYNSRNSQSNNIAAYITAHLLPPVAQVFHQSAGSITDLLRGVGNGNDATGLVANAQRYIAQAASQVHV</sequence>